<accession>Q8NI32</accession>
<accession>D3DP90</accession>
<accession>Q53TK0</accession>
<accession>Q7Z747</accession>
<accession>Q8IXK7</accession>
<dbReference type="EMBL" id="AF435957">
    <property type="protein sequence ID" value="AAM20908.1"/>
    <property type="molecule type" value="mRNA"/>
</dbReference>
<dbReference type="EMBL" id="AC009230">
    <property type="protein sequence ID" value="AAY14974.1"/>
    <property type="molecule type" value="Genomic_DNA"/>
</dbReference>
<dbReference type="EMBL" id="AC073271">
    <property type="status" value="NOT_ANNOTATED_CDS"/>
    <property type="molecule type" value="Genomic_DNA"/>
</dbReference>
<dbReference type="EMBL" id="CH471058">
    <property type="protein sequence ID" value="EAX11541.1"/>
    <property type="molecule type" value="Genomic_DNA"/>
</dbReference>
<dbReference type="EMBL" id="CH471058">
    <property type="protein sequence ID" value="EAX11542.1"/>
    <property type="molecule type" value="Genomic_DNA"/>
</dbReference>
<dbReference type="EMBL" id="CH471058">
    <property type="protein sequence ID" value="EAX11543.1"/>
    <property type="molecule type" value="Genomic_DNA"/>
</dbReference>
<dbReference type="EMBL" id="BC018203">
    <property type="protein sequence ID" value="AAH18203.1"/>
    <property type="status" value="ALT_SEQ"/>
    <property type="molecule type" value="mRNA"/>
</dbReference>
<dbReference type="EMBL" id="BC040176">
    <property type="protein sequence ID" value="AAH40176.2"/>
    <property type="molecule type" value="mRNA"/>
</dbReference>
<dbReference type="CCDS" id="CCDS46423.1">
    <molecule id="Q8NI32-2"/>
</dbReference>
<dbReference type="CCDS" id="CCDS82519.1">
    <molecule id="Q8NI32-1"/>
</dbReference>
<dbReference type="RefSeq" id="NP_001303931.1">
    <molecule id="Q8NI32-2"/>
    <property type="nucleotide sequence ID" value="NM_001317002.2"/>
</dbReference>
<dbReference type="RefSeq" id="NP_001303932.1">
    <molecule id="Q8NI32-1"/>
    <property type="nucleotide sequence ID" value="NM_001317003.2"/>
</dbReference>
<dbReference type="RefSeq" id="NP_001303933.1">
    <molecule id="Q8NI32-1"/>
    <property type="nucleotide sequence ID" value="NM_001317004.1"/>
</dbReference>
<dbReference type="RefSeq" id="NP_001303934.1">
    <molecule id="Q8NI32-1"/>
    <property type="nucleotide sequence ID" value="NM_001317005.2"/>
</dbReference>
<dbReference type="RefSeq" id="NP_001303935.1">
    <property type="nucleotide sequence ID" value="NM_001317006.1"/>
</dbReference>
<dbReference type="RefSeq" id="NP_808879.2">
    <molecule id="Q8NI32-2"/>
    <property type="nucleotide sequence ID" value="NM_177964.4"/>
</dbReference>
<dbReference type="RefSeq" id="XP_006712344.1">
    <molecule id="Q8NI32-1"/>
    <property type="nucleotide sequence ID" value="XM_006712281.5"/>
</dbReference>
<dbReference type="RefSeq" id="XP_011508925.1">
    <molecule id="Q8NI32-1"/>
    <property type="nucleotide sequence ID" value="XM_011510623.3"/>
</dbReference>
<dbReference type="RefSeq" id="XP_016858853.1">
    <molecule id="Q8NI32-2"/>
    <property type="nucleotide sequence ID" value="XM_017003364.2"/>
</dbReference>
<dbReference type="RefSeq" id="XP_016858854.1">
    <molecule id="Q8NI32-1"/>
    <property type="nucleotide sequence ID" value="XM_017003365.2"/>
</dbReference>
<dbReference type="RefSeq" id="XP_016858855.1">
    <molecule id="Q8NI32-1"/>
    <property type="nucleotide sequence ID" value="XM_017003366.2"/>
</dbReference>
<dbReference type="RefSeq" id="XP_047299366.1">
    <molecule id="Q8NI32-2"/>
    <property type="nucleotide sequence ID" value="XM_047443410.1"/>
</dbReference>
<dbReference type="RefSeq" id="XP_047299367.1">
    <molecule id="Q8NI32-2"/>
    <property type="nucleotide sequence ID" value="XM_047443411.1"/>
</dbReference>
<dbReference type="RefSeq" id="XP_047299368.1">
    <molecule id="Q8NI32-2"/>
    <property type="nucleotide sequence ID" value="XM_047443412.1"/>
</dbReference>
<dbReference type="RefSeq" id="XP_047299369.1">
    <molecule id="Q8NI32-2"/>
    <property type="nucleotide sequence ID" value="XM_047443413.1"/>
</dbReference>
<dbReference type="RefSeq" id="XP_054196533.1">
    <molecule id="Q8NI32-2"/>
    <property type="nucleotide sequence ID" value="XM_054340558.1"/>
</dbReference>
<dbReference type="RefSeq" id="XP_054196534.1">
    <molecule id="Q8NI32-2"/>
    <property type="nucleotide sequence ID" value="XM_054340559.1"/>
</dbReference>
<dbReference type="RefSeq" id="XP_054196535.1">
    <molecule id="Q8NI32-2"/>
    <property type="nucleotide sequence ID" value="XM_054340560.1"/>
</dbReference>
<dbReference type="RefSeq" id="XP_054196536.1">
    <molecule id="Q8NI32-2"/>
    <property type="nucleotide sequence ID" value="XM_054340561.1"/>
</dbReference>
<dbReference type="RefSeq" id="XP_054196537.1">
    <molecule id="Q8NI32-2"/>
    <property type="nucleotide sequence ID" value="XM_054340562.1"/>
</dbReference>
<dbReference type="RefSeq" id="XP_054196542.1">
    <molecule id="Q8NI32-1"/>
    <property type="nucleotide sequence ID" value="XM_054340567.1"/>
</dbReference>
<dbReference type="RefSeq" id="XP_054196543.1">
    <molecule id="Q8NI32-1"/>
    <property type="nucleotide sequence ID" value="XM_054340568.1"/>
</dbReference>
<dbReference type="RefSeq" id="XP_054196544.1">
    <molecule id="Q8NI32-1"/>
    <property type="nucleotide sequence ID" value="XM_054340569.1"/>
</dbReference>
<dbReference type="RefSeq" id="XP_054196545.1">
    <molecule id="Q8NI32-1"/>
    <property type="nucleotide sequence ID" value="XM_054340570.1"/>
</dbReference>
<dbReference type="PDB" id="6ZSO">
    <property type="method" value="NMR"/>
    <property type="chains" value="A=60-154"/>
</dbReference>
<dbReference type="PDBsum" id="6ZSO"/>
<dbReference type="SMR" id="Q8NI32"/>
<dbReference type="BioGRID" id="126243">
    <property type="interactions" value="50"/>
</dbReference>
<dbReference type="FunCoup" id="Q8NI32">
    <property type="interactions" value="492"/>
</dbReference>
<dbReference type="IntAct" id="Q8NI32">
    <property type="interactions" value="34"/>
</dbReference>
<dbReference type="STRING" id="9606.ENSP00000387077"/>
<dbReference type="TCDB" id="8.A.31.1.2">
    <property type="family name" value="the ly-6 neurotoxin-like protein1 precursor (lynx1) family"/>
</dbReference>
<dbReference type="GlyGen" id="Q8NI32">
    <property type="glycosylation" value="6 sites, 1 O-linked glycan (2 sites)"/>
</dbReference>
<dbReference type="iPTMnet" id="Q8NI32"/>
<dbReference type="BioMuta" id="LYPD6B"/>
<dbReference type="DMDM" id="74715711"/>
<dbReference type="MassIVE" id="Q8NI32"/>
<dbReference type="PaxDb" id="9606-ENSP00000387077"/>
<dbReference type="PeptideAtlas" id="Q8NI32"/>
<dbReference type="ProteomicsDB" id="73820">
    <molecule id="Q8NI32-1"/>
</dbReference>
<dbReference type="ProteomicsDB" id="73821">
    <molecule id="Q8NI32-2"/>
</dbReference>
<dbReference type="Antibodypedia" id="62112">
    <property type="antibodies" value="21 antibodies from 11 providers"/>
</dbReference>
<dbReference type="DNASU" id="130576"/>
<dbReference type="Ensembl" id="ENST00000409029.5">
    <molecule id="Q8NI32-1"/>
    <property type="protein sequence ID" value="ENSP00000386650.1"/>
    <property type="gene ID" value="ENSG00000150556.17"/>
</dbReference>
<dbReference type="Ensembl" id="ENST00000409642.8">
    <molecule id="Q8NI32-2"/>
    <property type="protein sequence ID" value="ENSP00000387077.3"/>
    <property type="gene ID" value="ENSG00000150556.17"/>
</dbReference>
<dbReference type="Ensembl" id="ENST00000409876.5">
    <molecule id="Q8NI32-1"/>
    <property type="protein sequence ID" value="ENSP00000386479.1"/>
    <property type="gene ID" value="ENSG00000150556.17"/>
</dbReference>
<dbReference type="GeneID" id="130576"/>
<dbReference type="KEGG" id="hsa:130576"/>
<dbReference type="MANE-Select" id="ENST00000409642.8">
    <molecule id="Q8NI32-2"/>
    <property type="protein sequence ID" value="ENSP00000387077.3"/>
    <property type="RefSeq nucleotide sequence ID" value="NM_177964.5"/>
    <property type="RefSeq protein sequence ID" value="NP_808879.2"/>
</dbReference>
<dbReference type="UCSC" id="uc002twv.2">
    <molecule id="Q8NI32-1"/>
    <property type="organism name" value="human"/>
</dbReference>
<dbReference type="AGR" id="HGNC:27018"/>
<dbReference type="CTD" id="130576"/>
<dbReference type="DisGeNET" id="130576"/>
<dbReference type="GeneCards" id="LYPD6B"/>
<dbReference type="HGNC" id="HGNC:27018">
    <property type="gene designation" value="LYPD6B"/>
</dbReference>
<dbReference type="HPA" id="ENSG00000150556">
    <property type="expression patterns" value="Tissue enhanced (skin)"/>
</dbReference>
<dbReference type="neXtProt" id="NX_Q8NI32"/>
<dbReference type="OpenTargets" id="ENSG00000150556"/>
<dbReference type="PharmGKB" id="PA162394734"/>
<dbReference type="VEuPathDB" id="HostDB:ENSG00000150556"/>
<dbReference type="eggNOG" id="ENOG502RXMG">
    <property type="taxonomic scope" value="Eukaryota"/>
</dbReference>
<dbReference type="GeneTree" id="ENSGT00390000000220"/>
<dbReference type="InParanoid" id="Q8NI32"/>
<dbReference type="OMA" id="FVGCHRH"/>
<dbReference type="OrthoDB" id="6149028at2759"/>
<dbReference type="PAN-GO" id="Q8NI32">
    <property type="GO annotations" value="1 GO annotation based on evolutionary models"/>
</dbReference>
<dbReference type="PhylomeDB" id="Q8NI32"/>
<dbReference type="TreeFam" id="TF332443"/>
<dbReference type="PathwayCommons" id="Q8NI32"/>
<dbReference type="Reactome" id="R-HSA-163125">
    <property type="pathway name" value="Post-translational modification: synthesis of GPI-anchored proteins"/>
</dbReference>
<dbReference type="SignaLink" id="Q8NI32"/>
<dbReference type="BioGRID-ORCS" id="130576">
    <property type="hits" value="11 hits in 1137 CRISPR screens"/>
</dbReference>
<dbReference type="ChiTaRS" id="LYPD6B">
    <property type="organism name" value="human"/>
</dbReference>
<dbReference type="GenomeRNAi" id="130576"/>
<dbReference type="Pharos" id="Q8NI32">
    <property type="development level" value="Tdark"/>
</dbReference>
<dbReference type="PRO" id="PR:Q8NI32"/>
<dbReference type="Proteomes" id="UP000005640">
    <property type="component" value="Chromosome 2"/>
</dbReference>
<dbReference type="RNAct" id="Q8NI32">
    <property type="molecule type" value="protein"/>
</dbReference>
<dbReference type="Bgee" id="ENSG00000150556">
    <property type="expression patterns" value="Expressed in skin of abdomen and 117 other cell types or tissues"/>
</dbReference>
<dbReference type="ExpressionAtlas" id="Q8NI32">
    <property type="expression patterns" value="baseline and differential"/>
</dbReference>
<dbReference type="GO" id="GO:0005576">
    <property type="term" value="C:extracellular region"/>
    <property type="evidence" value="ECO:0000304"/>
    <property type="project" value="Reactome"/>
</dbReference>
<dbReference type="GO" id="GO:0005886">
    <property type="term" value="C:plasma membrane"/>
    <property type="evidence" value="ECO:0000304"/>
    <property type="project" value="Reactome"/>
</dbReference>
<dbReference type="GO" id="GO:0098552">
    <property type="term" value="C:side of membrane"/>
    <property type="evidence" value="ECO:0007669"/>
    <property type="project" value="UniProtKB-KW"/>
</dbReference>
<dbReference type="GO" id="GO:0030548">
    <property type="term" value="F:acetylcholine receptor regulator activity"/>
    <property type="evidence" value="ECO:0000314"/>
    <property type="project" value="UniProtKB"/>
</dbReference>
<dbReference type="CDD" id="cd23626">
    <property type="entry name" value="TFP_LU_ECD_LYPD6B"/>
    <property type="match status" value="1"/>
</dbReference>
<dbReference type="FunFam" id="2.10.60.10:FF:000004">
    <property type="entry name" value="Ly6/PLAUR domain-containing protein 6"/>
    <property type="match status" value="1"/>
</dbReference>
<dbReference type="Gene3D" id="2.10.60.10">
    <property type="entry name" value="CD59"/>
    <property type="match status" value="1"/>
</dbReference>
<dbReference type="InterPro" id="IPR039457">
    <property type="entry name" value="LYPD6-like"/>
</dbReference>
<dbReference type="InterPro" id="IPR045860">
    <property type="entry name" value="Snake_toxin-like_sf"/>
</dbReference>
<dbReference type="PANTHER" id="PTHR31171">
    <property type="entry name" value="LY6/PLAUR DOMAIN-CONTAINING PROTEIN 6"/>
    <property type="match status" value="1"/>
</dbReference>
<dbReference type="PANTHER" id="PTHR31171:SF3">
    <property type="entry name" value="LY6_PLAUR DOMAIN-CONTAINING PROTEIN 6B"/>
    <property type="match status" value="1"/>
</dbReference>
<dbReference type="Pfam" id="PF16975">
    <property type="entry name" value="UPAR_LY6_2"/>
    <property type="match status" value="1"/>
</dbReference>
<dbReference type="SUPFAM" id="SSF57302">
    <property type="entry name" value="Snake toxin-like"/>
    <property type="match status" value="1"/>
</dbReference>
<comment type="function">
    <text evidence="2 4">Likely acts as a modulator of nicotinic acetylcholine receptors (nAChRs) activity (PubMed:26586467, PubMed:34631692). In vitro acts on nAChRs in a subtype- and stoichiometry-dependent manner (PubMed:26586467). Modulates specifically alpha-3(3):beta-4(2) nAChRs by enhancing the sensitivity to ACh, decreasing ACh-induced maximal current response and increasing the rate of desensitization to ACh; has no effect on alpha-7 homomeric nAChRs; modulates alpha-3(2):alpha-5:beta-4(2) nAChRs in the context of CHRNA5/alpha-5 variant Asn-398 but not its wild-type sequence (PubMed:26586467). However, according to another report in vitro it can weakly inhibits alpha-7 nAChRs (PubMed:34631692).</text>
</comment>
<comment type="subcellular location">
    <subcellularLocation>
        <location evidence="6">Cell membrane</location>
        <topology evidence="6">Lipid-anchor</topology>
        <topology evidence="6">GPI-anchor</topology>
    </subcellularLocation>
</comment>
<comment type="alternative products">
    <event type="alternative splicing"/>
    <isoform>
        <id>Q8NI32-1</id>
        <name>1</name>
        <sequence type="displayed"/>
    </isoform>
    <isoform>
        <id>Q8NI32-2</id>
        <name>2</name>
        <sequence type="described" ref="VSP_031842"/>
    </isoform>
</comment>
<comment type="sequence caution" evidence="6">
    <conflict type="erroneous initiation">
        <sequence resource="EMBL-CDS" id="AAH18203"/>
    </conflict>
    <text>Truncated N-terminus.</text>
</comment>
<comment type="sequence caution" evidence="6">
    <conflict type="frameshift">
        <sequence resource="EMBL-CDS" id="AAH18203"/>
    </conflict>
</comment>
<sequence>MLYKSSDRPAHKVSMLLLCHALAIAVVQIVIFSESWAFAKNINFYNVRPPLDPTPFPNSFKCFTCENAGDNYNCNRWAEDKWCPQNTQYCLTVHHFTSHGRSTSITKKCASRSECHFVGCHHSRDSEHTECRSCCEGMICNVELPTNHTNAVFAVMHAQRTSGSSAPTLYLPVLAWVFVLPLL</sequence>
<proteinExistence type="evidence at protein level"/>
<name>LPD6B_HUMAN</name>
<feature type="signal peptide" evidence="1">
    <location>
        <begin position="1"/>
        <end position="39"/>
    </location>
</feature>
<feature type="chain" id="PRO_0000321950" description="Ly6/PLAUR domain-containing protein 6B">
    <location>
        <begin position="40"/>
        <end position="164"/>
    </location>
</feature>
<feature type="propeptide" id="PRO_0000321951" description="Removed in mature form" evidence="1">
    <location>
        <begin position="165"/>
        <end position="183"/>
    </location>
</feature>
<feature type="domain" description="UPAR/Ly6">
    <location>
        <begin position="60"/>
        <end position="151"/>
    </location>
</feature>
<feature type="region of interest" description="Sufficient for inhibiting alpha-7 nAChR currents" evidence="4">
    <location>
        <begin position="60"/>
        <end position="154"/>
    </location>
</feature>
<feature type="lipid moiety-binding region" description="GPI-anchor amidated serine" evidence="1">
    <location>
        <position position="164"/>
    </location>
</feature>
<feature type="disulfide bond" evidence="3 7">
    <location>
        <begin position="62"/>
        <end position="90"/>
    </location>
</feature>
<feature type="disulfide bond" evidence="3 7">
    <location>
        <begin position="65"/>
        <end position="74"/>
    </location>
</feature>
<feature type="disulfide bond" evidence="3 7">
    <location>
        <begin position="83"/>
        <end position="109"/>
    </location>
</feature>
<feature type="disulfide bond" evidence="3 7">
    <location>
        <begin position="115"/>
        <end position="134"/>
    </location>
</feature>
<feature type="disulfide bond" evidence="3 7">
    <location>
        <begin position="120"/>
        <end position="131"/>
    </location>
</feature>
<feature type="disulfide bond" evidence="3 7">
    <location>
        <begin position="135"/>
        <end position="140"/>
    </location>
</feature>
<feature type="splice variant" id="VSP_031842" description="In isoform 2." evidence="5">
    <original>L</original>
    <variation>LLITLSANLFTVPERSLTTTFSFSR</variation>
    <location>
        <position position="2"/>
    </location>
</feature>
<feature type="helix" evidence="8">
    <location>
        <begin position="71"/>
        <end position="77"/>
    </location>
</feature>
<feature type="strand" evidence="8">
    <location>
        <begin position="89"/>
        <end position="99"/>
    </location>
</feature>
<feature type="strand" evidence="8">
    <location>
        <begin position="105"/>
        <end position="110"/>
    </location>
</feature>
<feature type="turn" evidence="8">
    <location>
        <begin position="112"/>
        <end position="117"/>
    </location>
</feature>
<feature type="strand" evidence="8">
    <location>
        <begin position="119"/>
        <end position="122"/>
    </location>
</feature>
<feature type="strand" evidence="8">
    <location>
        <begin position="124"/>
        <end position="135"/>
    </location>
</feature>
<reference key="1">
    <citation type="submission" date="2001-10" db="EMBL/GenBank/DDBJ databases">
        <authorList>
            <person name="Guo J.H."/>
            <person name="Yu L."/>
        </authorList>
    </citation>
    <scope>NUCLEOTIDE SEQUENCE [LARGE SCALE MRNA] (ISOFORM 1)</scope>
</reference>
<reference key="2">
    <citation type="journal article" date="2005" name="Nature">
        <title>Generation and annotation of the DNA sequences of human chromosomes 2 and 4.</title>
        <authorList>
            <person name="Hillier L.W."/>
            <person name="Graves T.A."/>
            <person name="Fulton R.S."/>
            <person name="Fulton L.A."/>
            <person name="Pepin K.H."/>
            <person name="Minx P."/>
            <person name="Wagner-McPherson C."/>
            <person name="Layman D."/>
            <person name="Wylie K."/>
            <person name="Sekhon M."/>
            <person name="Becker M.C."/>
            <person name="Fewell G.A."/>
            <person name="Delehaunty K.D."/>
            <person name="Miner T.L."/>
            <person name="Nash W.E."/>
            <person name="Kremitzki C."/>
            <person name="Oddy L."/>
            <person name="Du H."/>
            <person name="Sun H."/>
            <person name="Bradshaw-Cordum H."/>
            <person name="Ali J."/>
            <person name="Carter J."/>
            <person name="Cordes M."/>
            <person name="Harris A."/>
            <person name="Isak A."/>
            <person name="van Brunt A."/>
            <person name="Nguyen C."/>
            <person name="Du F."/>
            <person name="Courtney L."/>
            <person name="Kalicki J."/>
            <person name="Ozersky P."/>
            <person name="Abbott S."/>
            <person name="Armstrong J."/>
            <person name="Belter E.A."/>
            <person name="Caruso L."/>
            <person name="Cedroni M."/>
            <person name="Cotton M."/>
            <person name="Davidson T."/>
            <person name="Desai A."/>
            <person name="Elliott G."/>
            <person name="Erb T."/>
            <person name="Fronick C."/>
            <person name="Gaige T."/>
            <person name="Haakenson W."/>
            <person name="Haglund K."/>
            <person name="Holmes A."/>
            <person name="Harkins R."/>
            <person name="Kim K."/>
            <person name="Kruchowski S.S."/>
            <person name="Strong C.M."/>
            <person name="Grewal N."/>
            <person name="Goyea E."/>
            <person name="Hou S."/>
            <person name="Levy A."/>
            <person name="Martinka S."/>
            <person name="Mead K."/>
            <person name="McLellan M.D."/>
            <person name="Meyer R."/>
            <person name="Randall-Maher J."/>
            <person name="Tomlinson C."/>
            <person name="Dauphin-Kohlberg S."/>
            <person name="Kozlowicz-Reilly A."/>
            <person name="Shah N."/>
            <person name="Swearengen-Shahid S."/>
            <person name="Snider J."/>
            <person name="Strong J.T."/>
            <person name="Thompson J."/>
            <person name="Yoakum M."/>
            <person name="Leonard S."/>
            <person name="Pearman C."/>
            <person name="Trani L."/>
            <person name="Radionenko M."/>
            <person name="Waligorski J.E."/>
            <person name="Wang C."/>
            <person name="Rock S.M."/>
            <person name="Tin-Wollam A.-M."/>
            <person name="Maupin R."/>
            <person name="Latreille P."/>
            <person name="Wendl M.C."/>
            <person name="Yang S.-P."/>
            <person name="Pohl C."/>
            <person name="Wallis J.W."/>
            <person name="Spieth J."/>
            <person name="Bieri T.A."/>
            <person name="Berkowicz N."/>
            <person name="Nelson J.O."/>
            <person name="Osborne J."/>
            <person name="Ding L."/>
            <person name="Meyer R."/>
            <person name="Sabo A."/>
            <person name="Shotland Y."/>
            <person name="Sinha P."/>
            <person name="Wohldmann P.E."/>
            <person name="Cook L.L."/>
            <person name="Hickenbotham M.T."/>
            <person name="Eldred J."/>
            <person name="Williams D."/>
            <person name="Jones T.A."/>
            <person name="She X."/>
            <person name="Ciccarelli F.D."/>
            <person name="Izaurralde E."/>
            <person name="Taylor J."/>
            <person name="Schmutz J."/>
            <person name="Myers R.M."/>
            <person name="Cox D.R."/>
            <person name="Huang X."/>
            <person name="McPherson J.D."/>
            <person name="Mardis E.R."/>
            <person name="Clifton S.W."/>
            <person name="Warren W.C."/>
            <person name="Chinwalla A.T."/>
            <person name="Eddy S.R."/>
            <person name="Marra M.A."/>
            <person name="Ovcharenko I."/>
            <person name="Furey T.S."/>
            <person name="Miller W."/>
            <person name="Eichler E.E."/>
            <person name="Bork P."/>
            <person name="Suyama M."/>
            <person name="Torrents D."/>
            <person name="Waterston R.H."/>
            <person name="Wilson R.K."/>
        </authorList>
    </citation>
    <scope>NUCLEOTIDE SEQUENCE [LARGE SCALE GENOMIC DNA]</scope>
</reference>
<reference key="3">
    <citation type="submission" date="2005-09" db="EMBL/GenBank/DDBJ databases">
        <authorList>
            <person name="Mural R.J."/>
            <person name="Istrail S."/>
            <person name="Sutton G.G."/>
            <person name="Florea L."/>
            <person name="Halpern A.L."/>
            <person name="Mobarry C.M."/>
            <person name="Lippert R."/>
            <person name="Walenz B."/>
            <person name="Shatkay H."/>
            <person name="Dew I."/>
            <person name="Miller J.R."/>
            <person name="Flanigan M.J."/>
            <person name="Edwards N.J."/>
            <person name="Bolanos R."/>
            <person name="Fasulo D."/>
            <person name="Halldorsson B.V."/>
            <person name="Hannenhalli S."/>
            <person name="Turner R."/>
            <person name="Yooseph S."/>
            <person name="Lu F."/>
            <person name="Nusskern D.R."/>
            <person name="Shue B.C."/>
            <person name="Zheng X.H."/>
            <person name="Zhong F."/>
            <person name="Delcher A.L."/>
            <person name="Huson D.H."/>
            <person name="Kravitz S.A."/>
            <person name="Mouchard L."/>
            <person name="Reinert K."/>
            <person name="Remington K.A."/>
            <person name="Clark A.G."/>
            <person name="Waterman M.S."/>
            <person name="Eichler E.E."/>
            <person name="Adams M.D."/>
            <person name="Hunkapiller M.W."/>
            <person name="Myers E.W."/>
            <person name="Venter J.C."/>
        </authorList>
    </citation>
    <scope>NUCLEOTIDE SEQUENCE [LARGE SCALE GENOMIC DNA]</scope>
</reference>
<reference key="4">
    <citation type="journal article" date="2004" name="Genome Res.">
        <title>The status, quality, and expansion of the NIH full-length cDNA project: the Mammalian Gene Collection (MGC).</title>
        <authorList>
            <consortium name="The MGC Project Team"/>
        </authorList>
    </citation>
    <scope>NUCLEOTIDE SEQUENCE [LARGE SCALE MRNA] (ISOFORMS 1 AND 2)</scope>
    <source>
        <tissue>Brain</tissue>
        <tissue>Ovary</tissue>
    </source>
</reference>
<reference key="5">
    <citation type="journal article" date="2016" name="FASEB J.">
        <title>The prototoxin LYPD6B modulates heteromeric alpha3beta4-containing nicotinic acetylcholine receptors, but not alpha7 homomers.</title>
        <authorList>
            <person name="Ochoa V."/>
            <person name="George A.A."/>
            <person name="Nishi R."/>
            <person name="Whiteaker P."/>
        </authorList>
    </citation>
    <scope>FUNCTION</scope>
</reference>
<reference key="6">
    <citation type="journal article" date="2021" name="Front. Cell Dev. Biol.">
        <title>Human Three-Finger protein Lypd6 is a negative modulator of the cholinergic System in the brain.</title>
        <authorList>
            <person name="Kulbatskii D."/>
            <person name="Shenkarev Z."/>
            <person name="Bychkov M."/>
            <person name="Loktyushov E."/>
            <person name="Shulepko M."/>
            <person name="Koshelev S."/>
            <person name="Povarov I."/>
            <person name="Popov A."/>
            <person name="Peigneur S."/>
            <person name="Chugunov A."/>
            <person name="Kozlov S."/>
            <person name="Sharonova I."/>
            <person name="Efremov R."/>
            <person name="Skrebitsky V."/>
            <person name="Tytgat J."/>
            <person name="Kirpichnikov M."/>
            <person name="Lyukmanova E."/>
        </authorList>
    </citation>
    <scope>FUNCTION</scope>
</reference>
<reference evidence="7" key="7">
    <citation type="journal article" date="2020" name="Int. J. Mol. Sci.">
        <title>Structural Diversity and Dynamics of Human Three-Finger Proteins Acting on Nicotinic Acetylcholine Receptors.</title>
        <authorList>
            <person name="Paramonov A.S."/>
            <person name="Kocharovskaya M.V."/>
            <person name="Tsarev A.V."/>
            <person name="Kulbatskii D.S."/>
            <person name="Loktyushov E.V."/>
            <person name="Shulepko M.A."/>
            <person name="Kirpichnikov M.P."/>
            <person name="Lyukmanova E.N."/>
            <person name="Shenkarev Z.O."/>
        </authorList>
    </citation>
    <scope>STRUCTURE BY NMR OF 60-154</scope>
    <scope>DISULFIDE BONDS</scope>
</reference>
<gene>
    <name type="primary">LYPD6B</name>
</gene>
<keyword id="KW-0002">3D-structure</keyword>
<keyword id="KW-0025">Alternative splicing</keyword>
<keyword id="KW-1003">Cell membrane</keyword>
<keyword id="KW-1015">Disulfide bond</keyword>
<keyword id="KW-0325">Glycoprotein</keyword>
<keyword id="KW-0336">GPI-anchor</keyword>
<keyword id="KW-0449">Lipoprotein</keyword>
<keyword id="KW-0472">Membrane</keyword>
<keyword id="KW-1267">Proteomics identification</keyword>
<keyword id="KW-1185">Reference proteome</keyword>
<keyword id="KW-0732">Signal</keyword>
<evidence type="ECO:0000255" key="1"/>
<evidence type="ECO:0000269" key="2">
    <source>
    </source>
</evidence>
<evidence type="ECO:0000269" key="3">
    <source>
    </source>
</evidence>
<evidence type="ECO:0000269" key="4">
    <source>
    </source>
</evidence>
<evidence type="ECO:0000303" key="5">
    <source>
    </source>
</evidence>
<evidence type="ECO:0000305" key="6"/>
<evidence type="ECO:0007744" key="7">
    <source>
        <dbReference type="PDB" id="6ZSO"/>
    </source>
</evidence>
<evidence type="ECO:0007829" key="8">
    <source>
        <dbReference type="PDB" id="6ZSO"/>
    </source>
</evidence>
<protein>
    <recommendedName>
        <fullName>Ly6/PLAUR domain-containing protein 6B</fullName>
    </recommendedName>
</protein>
<organism>
    <name type="scientific">Homo sapiens</name>
    <name type="common">Human</name>
    <dbReference type="NCBI Taxonomy" id="9606"/>
    <lineage>
        <taxon>Eukaryota</taxon>
        <taxon>Metazoa</taxon>
        <taxon>Chordata</taxon>
        <taxon>Craniata</taxon>
        <taxon>Vertebrata</taxon>
        <taxon>Euteleostomi</taxon>
        <taxon>Mammalia</taxon>
        <taxon>Eutheria</taxon>
        <taxon>Euarchontoglires</taxon>
        <taxon>Primates</taxon>
        <taxon>Haplorrhini</taxon>
        <taxon>Catarrhini</taxon>
        <taxon>Hominidae</taxon>
        <taxon>Homo</taxon>
    </lineage>
</organism>